<organism>
    <name type="scientific">Cereibacter sphaeroides (strain ATCC 17023 / DSM 158 / JCM 6121 / CCUG 31486 / LMG 2827 / NBRC 12203 / NCIMB 8253 / ATH 2.4.1.)</name>
    <name type="common">Rhodobacter sphaeroides</name>
    <dbReference type="NCBI Taxonomy" id="272943"/>
    <lineage>
        <taxon>Bacteria</taxon>
        <taxon>Pseudomonadati</taxon>
        <taxon>Pseudomonadota</taxon>
        <taxon>Alphaproteobacteria</taxon>
        <taxon>Rhodobacterales</taxon>
        <taxon>Paracoccaceae</taxon>
        <taxon>Cereibacter</taxon>
    </lineage>
</organism>
<protein>
    <recommendedName>
        <fullName evidence="1">NADH-quinone oxidoreductase subunit B 2</fullName>
        <ecNumber evidence="1">7.1.1.-</ecNumber>
    </recommendedName>
    <alternativeName>
        <fullName evidence="1">NADH dehydrogenase I subunit B 2</fullName>
    </alternativeName>
    <alternativeName>
        <fullName evidence="1">NDH-1 subunit B 2</fullName>
    </alternativeName>
</protein>
<comment type="function">
    <text evidence="1">NDH-1 shuttles electrons from NADH, via FMN and iron-sulfur (Fe-S) centers, to quinones in the respiratory chain. The immediate electron acceptor for the enzyme in this species is believed to be ubiquinone. Couples the redox reaction to proton translocation (for every two electrons transferred, four hydrogen ions are translocated across the cytoplasmic membrane), and thus conserves the redox energy in a proton gradient.</text>
</comment>
<comment type="catalytic activity">
    <reaction evidence="1">
        <text>a quinone + NADH + 5 H(+)(in) = a quinol + NAD(+) + 4 H(+)(out)</text>
        <dbReference type="Rhea" id="RHEA:57888"/>
        <dbReference type="ChEBI" id="CHEBI:15378"/>
        <dbReference type="ChEBI" id="CHEBI:24646"/>
        <dbReference type="ChEBI" id="CHEBI:57540"/>
        <dbReference type="ChEBI" id="CHEBI:57945"/>
        <dbReference type="ChEBI" id="CHEBI:132124"/>
    </reaction>
</comment>
<comment type="cofactor">
    <cofactor evidence="1">
        <name>[4Fe-4S] cluster</name>
        <dbReference type="ChEBI" id="CHEBI:49883"/>
    </cofactor>
    <text evidence="1">Binds 1 [4Fe-4S] cluster.</text>
</comment>
<comment type="subunit">
    <text evidence="1">NDH-1 is composed of 14 different subunits. Subunits NuoB, C, D, E, F, and G constitute the peripheral sector of the complex.</text>
</comment>
<comment type="subcellular location">
    <subcellularLocation>
        <location evidence="1">Cell inner membrane</location>
        <topology evidence="1">Peripheral membrane protein</topology>
        <orientation evidence="1">Cytoplasmic side</orientation>
    </subcellularLocation>
</comment>
<comment type="similarity">
    <text evidence="1">Belongs to the complex I 20 kDa subunit family.</text>
</comment>
<sequence length="205" mass="22908">MSWTIGRPDAEAPEDRMAASHLFTRLDDLVAWSRKHSLWPFNFGLSCCYVEMATALTPVYDQARFGAEVIRSTPRQADLLIVSGTVFRKMAVPLYRLYSQMREPRWVISMGACANSGGMYDIYSVVQGVDSFLPVDVYVPGCPPRPEALMEALVLLQSKIATEARPLQIRMGETGPARPFDPVPRRDALREARMAVTRLADPEAT</sequence>
<name>NUOB2_CERS4</name>
<dbReference type="EC" id="7.1.1.-" evidence="1"/>
<dbReference type="EMBL" id="CP000143">
    <property type="protein sequence ID" value="ABA79276.1"/>
    <property type="molecule type" value="Genomic_DNA"/>
</dbReference>
<dbReference type="RefSeq" id="WP_002720250.1">
    <property type="nucleotide sequence ID" value="NZ_CP030271.1"/>
</dbReference>
<dbReference type="RefSeq" id="YP_353177.1">
    <property type="nucleotide sequence ID" value="NC_007493.2"/>
</dbReference>
<dbReference type="SMR" id="Q3J1Q8"/>
<dbReference type="STRING" id="272943.RSP_0101"/>
<dbReference type="EnsemblBacteria" id="ABA79276">
    <property type="protein sequence ID" value="ABA79276"/>
    <property type="gene ID" value="RSP_0101"/>
</dbReference>
<dbReference type="KEGG" id="rsp:RSP_0101"/>
<dbReference type="PATRIC" id="fig|272943.9.peg.2041"/>
<dbReference type="eggNOG" id="COG0377">
    <property type="taxonomic scope" value="Bacteria"/>
</dbReference>
<dbReference type="OrthoDB" id="9786737at2"/>
<dbReference type="PhylomeDB" id="Q3J1Q8"/>
<dbReference type="Proteomes" id="UP000002703">
    <property type="component" value="Chromosome 1"/>
</dbReference>
<dbReference type="GO" id="GO:0005886">
    <property type="term" value="C:plasma membrane"/>
    <property type="evidence" value="ECO:0007669"/>
    <property type="project" value="UniProtKB-SubCell"/>
</dbReference>
<dbReference type="GO" id="GO:0045271">
    <property type="term" value="C:respiratory chain complex I"/>
    <property type="evidence" value="ECO:0007669"/>
    <property type="project" value="TreeGrafter"/>
</dbReference>
<dbReference type="GO" id="GO:0051539">
    <property type="term" value="F:4 iron, 4 sulfur cluster binding"/>
    <property type="evidence" value="ECO:0007669"/>
    <property type="project" value="UniProtKB-KW"/>
</dbReference>
<dbReference type="GO" id="GO:0005506">
    <property type="term" value="F:iron ion binding"/>
    <property type="evidence" value="ECO:0007669"/>
    <property type="project" value="UniProtKB-UniRule"/>
</dbReference>
<dbReference type="GO" id="GO:0008137">
    <property type="term" value="F:NADH dehydrogenase (ubiquinone) activity"/>
    <property type="evidence" value="ECO:0007669"/>
    <property type="project" value="InterPro"/>
</dbReference>
<dbReference type="GO" id="GO:0050136">
    <property type="term" value="F:NADH:ubiquinone reductase (non-electrogenic) activity"/>
    <property type="evidence" value="ECO:0007669"/>
    <property type="project" value="UniProtKB-UniRule"/>
</dbReference>
<dbReference type="GO" id="GO:0048038">
    <property type="term" value="F:quinone binding"/>
    <property type="evidence" value="ECO:0007669"/>
    <property type="project" value="UniProtKB-KW"/>
</dbReference>
<dbReference type="GO" id="GO:0009060">
    <property type="term" value="P:aerobic respiration"/>
    <property type="evidence" value="ECO:0007669"/>
    <property type="project" value="TreeGrafter"/>
</dbReference>
<dbReference type="GO" id="GO:0015990">
    <property type="term" value="P:electron transport coupled proton transport"/>
    <property type="evidence" value="ECO:0007669"/>
    <property type="project" value="TreeGrafter"/>
</dbReference>
<dbReference type="FunFam" id="3.40.50.12280:FF:000002">
    <property type="entry name" value="NADH-quinone oxidoreductase subunit B"/>
    <property type="match status" value="1"/>
</dbReference>
<dbReference type="Gene3D" id="3.40.50.12280">
    <property type="match status" value="1"/>
</dbReference>
<dbReference type="HAMAP" id="MF_01356">
    <property type="entry name" value="NDH1_NuoB"/>
    <property type="match status" value="1"/>
</dbReference>
<dbReference type="InterPro" id="IPR006137">
    <property type="entry name" value="NADH_UbQ_OxRdtase-like_20kDa"/>
</dbReference>
<dbReference type="InterPro" id="IPR006138">
    <property type="entry name" value="NADH_UQ_OxRdtase_20Kd_su"/>
</dbReference>
<dbReference type="NCBIfam" id="TIGR01957">
    <property type="entry name" value="nuoB_fam"/>
    <property type="match status" value="1"/>
</dbReference>
<dbReference type="NCBIfam" id="NF005012">
    <property type="entry name" value="PRK06411.1"/>
    <property type="match status" value="1"/>
</dbReference>
<dbReference type="PANTHER" id="PTHR11995">
    <property type="entry name" value="NADH DEHYDROGENASE"/>
    <property type="match status" value="1"/>
</dbReference>
<dbReference type="PANTHER" id="PTHR11995:SF14">
    <property type="entry name" value="NADH DEHYDROGENASE [UBIQUINONE] IRON-SULFUR PROTEIN 7, MITOCHONDRIAL"/>
    <property type="match status" value="1"/>
</dbReference>
<dbReference type="Pfam" id="PF01058">
    <property type="entry name" value="Oxidored_q6"/>
    <property type="match status" value="1"/>
</dbReference>
<dbReference type="SUPFAM" id="SSF56770">
    <property type="entry name" value="HydA/Nqo6-like"/>
    <property type="match status" value="1"/>
</dbReference>
<dbReference type="PROSITE" id="PS01150">
    <property type="entry name" value="COMPLEX1_20K"/>
    <property type="match status" value="1"/>
</dbReference>
<proteinExistence type="inferred from homology"/>
<feature type="chain" id="PRO_0000376331" description="NADH-quinone oxidoreductase subunit B 2">
    <location>
        <begin position="1"/>
        <end position="205"/>
    </location>
</feature>
<feature type="binding site" evidence="1">
    <location>
        <position position="47"/>
    </location>
    <ligand>
        <name>[4Fe-4S] cluster</name>
        <dbReference type="ChEBI" id="CHEBI:49883"/>
    </ligand>
</feature>
<feature type="binding site" evidence="1">
    <location>
        <position position="48"/>
    </location>
    <ligand>
        <name>[4Fe-4S] cluster</name>
        <dbReference type="ChEBI" id="CHEBI:49883"/>
    </ligand>
</feature>
<feature type="binding site" evidence="1">
    <location>
        <position position="113"/>
    </location>
    <ligand>
        <name>[4Fe-4S] cluster</name>
        <dbReference type="ChEBI" id="CHEBI:49883"/>
    </ligand>
</feature>
<feature type="binding site" evidence="1">
    <location>
        <position position="142"/>
    </location>
    <ligand>
        <name>[4Fe-4S] cluster</name>
        <dbReference type="ChEBI" id="CHEBI:49883"/>
    </ligand>
</feature>
<keyword id="KW-0004">4Fe-4S</keyword>
<keyword id="KW-0997">Cell inner membrane</keyword>
<keyword id="KW-1003">Cell membrane</keyword>
<keyword id="KW-0408">Iron</keyword>
<keyword id="KW-0411">Iron-sulfur</keyword>
<keyword id="KW-0472">Membrane</keyword>
<keyword id="KW-0479">Metal-binding</keyword>
<keyword id="KW-0520">NAD</keyword>
<keyword id="KW-0874">Quinone</keyword>
<keyword id="KW-1185">Reference proteome</keyword>
<keyword id="KW-1278">Translocase</keyword>
<keyword id="KW-0813">Transport</keyword>
<keyword id="KW-0830">Ubiquinone</keyword>
<evidence type="ECO:0000255" key="1">
    <source>
        <dbReference type="HAMAP-Rule" id="MF_01356"/>
    </source>
</evidence>
<reference key="1">
    <citation type="submission" date="2005-09" db="EMBL/GenBank/DDBJ databases">
        <title>Complete sequence of chromosome 1 of Rhodobacter sphaeroides 2.4.1.</title>
        <authorList>
            <person name="Copeland A."/>
            <person name="Lucas S."/>
            <person name="Lapidus A."/>
            <person name="Barry K."/>
            <person name="Detter J.C."/>
            <person name="Glavina T."/>
            <person name="Hammon N."/>
            <person name="Israni S."/>
            <person name="Pitluck S."/>
            <person name="Richardson P."/>
            <person name="Mackenzie C."/>
            <person name="Choudhary M."/>
            <person name="Larimer F."/>
            <person name="Hauser L.J."/>
            <person name="Land M."/>
            <person name="Donohue T.J."/>
            <person name="Kaplan S."/>
        </authorList>
    </citation>
    <scope>NUCLEOTIDE SEQUENCE [LARGE SCALE GENOMIC DNA]</scope>
    <source>
        <strain>ATCC 17023 / DSM 158 / JCM 6121 / CCUG 31486 / LMG 2827 / NBRC 12203 / NCIMB 8253 / ATH 2.4.1.</strain>
    </source>
</reference>
<gene>
    <name evidence="1" type="primary">nuoB2</name>
    <name type="ordered locus">RHOS4_17080</name>
    <name type="ORF">RSP_0101</name>
</gene>
<accession>Q3J1Q8</accession>